<reference key="1">
    <citation type="journal article" date="2005" name="Proc. Natl. Acad. Sci. U.S.A.">
        <title>Complete genome sequencing of Anaplasma marginale reveals that the surface is skewed to two superfamilies of outer membrane proteins.</title>
        <authorList>
            <person name="Brayton K.A."/>
            <person name="Kappmeyer L.S."/>
            <person name="Herndon D.R."/>
            <person name="Dark M.J."/>
            <person name="Tibbals D.L."/>
            <person name="Palmer G.H."/>
            <person name="McGuire T.C."/>
            <person name="Knowles D.P. Jr."/>
        </authorList>
    </citation>
    <scope>NUCLEOTIDE SEQUENCE [LARGE SCALE GENOMIC DNA]</scope>
    <source>
        <strain>St. Maries</strain>
    </source>
</reference>
<evidence type="ECO:0000255" key="1">
    <source>
        <dbReference type="HAMAP-Rule" id="MF_01708"/>
    </source>
</evidence>
<feature type="chain" id="PRO_0000272054" description="Lipoprotein-releasing system ATP-binding protein LolD">
    <location>
        <begin position="1"/>
        <end position="224"/>
    </location>
</feature>
<feature type="domain" description="ABC transporter" evidence="1">
    <location>
        <begin position="5"/>
        <end position="224"/>
    </location>
</feature>
<feature type="binding site" evidence="1">
    <location>
        <begin position="40"/>
        <end position="47"/>
    </location>
    <ligand>
        <name>ATP</name>
        <dbReference type="ChEBI" id="CHEBI:30616"/>
    </ligand>
</feature>
<sequence>MTTVLEILDVSKCYGRRNRVCVLSNINLKIQRGEFAALIGSSGSGKSTLLHIASLLEVPTSGTVVLNGTVCAPASDKTRTMMRRKHMGFVYQFHHLLQEFSVLENVMLPQRILGHGASTAESVAAAILEEMGLQDKAECRISELSGGERQRVAVARGIVNSPTIILADEPTGSLDPQMSKAVFSVLHKHVKAKNLAGLVATHDRTLAKQTDRVLSLSGGMLTEL</sequence>
<proteinExistence type="inferred from homology"/>
<comment type="function">
    <text evidence="1">Part of the ABC transporter complex LolCDE involved in the translocation of mature outer membrane-directed lipoproteins, from the inner membrane to the periplasmic chaperone, LolA. Responsible for the formation of the LolA-lipoprotein complex in an ATP-dependent manner.</text>
</comment>
<comment type="subunit">
    <text evidence="1">The complex is composed of two ATP-binding proteins (LolD) and two transmembrane proteins (LolC and LolE).</text>
</comment>
<comment type="subcellular location">
    <subcellularLocation>
        <location evidence="1">Cell inner membrane</location>
        <topology evidence="1">Peripheral membrane protein</topology>
    </subcellularLocation>
</comment>
<comment type="similarity">
    <text evidence="1">Belongs to the ABC transporter superfamily. Lipoprotein translocase (TC 3.A.1.125) family.</text>
</comment>
<name>LOLD_ANAMM</name>
<keyword id="KW-0067">ATP-binding</keyword>
<keyword id="KW-0997">Cell inner membrane</keyword>
<keyword id="KW-1003">Cell membrane</keyword>
<keyword id="KW-0472">Membrane</keyword>
<keyword id="KW-0547">Nucleotide-binding</keyword>
<keyword id="KW-1278">Translocase</keyword>
<keyword id="KW-0813">Transport</keyword>
<protein>
    <recommendedName>
        <fullName evidence="1">Lipoprotein-releasing system ATP-binding protein LolD</fullName>
        <ecNumber evidence="1">7.6.2.-</ecNumber>
    </recommendedName>
</protein>
<organism>
    <name type="scientific">Anaplasma marginale (strain St. Maries)</name>
    <dbReference type="NCBI Taxonomy" id="234826"/>
    <lineage>
        <taxon>Bacteria</taxon>
        <taxon>Pseudomonadati</taxon>
        <taxon>Pseudomonadota</taxon>
        <taxon>Alphaproteobacteria</taxon>
        <taxon>Rickettsiales</taxon>
        <taxon>Anaplasmataceae</taxon>
        <taxon>Anaplasma</taxon>
    </lineage>
</organism>
<dbReference type="EC" id="7.6.2.-" evidence="1"/>
<dbReference type="EMBL" id="CP000030">
    <property type="protein sequence ID" value="AAV86207.1"/>
    <property type="molecule type" value="Genomic_DNA"/>
</dbReference>
<dbReference type="RefSeq" id="WP_010262326.1">
    <property type="nucleotide sequence ID" value="NZ_AFMU01000055.1"/>
</dbReference>
<dbReference type="SMR" id="Q5PBX2"/>
<dbReference type="KEGG" id="ama:AM023"/>
<dbReference type="HOGENOM" id="CLU_000604_1_22_5"/>
<dbReference type="GO" id="GO:0005886">
    <property type="term" value="C:plasma membrane"/>
    <property type="evidence" value="ECO:0007669"/>
    <property type="project" value="UniProtKB-SubCell"/>
</dbReference>
<dbReference type="GO" id="GO:0005524">
    <property type="term" value="F:ATP binding"/>
    <property type="evidence" value="ECO:0007669"/>
    <property type="project" value="UniProtKB-KW"/>
</dbReference>
<dbReference type="GO" id="GO:0016887">
    <property type="term" value="F:ATP hydrolysis activity"/>
    <property type="evidence" value="ECO:0007669"/>
    <property type="project" value="InterPro"/>
</dbReference>
<dbReference type="GO" id="GO:0022857">
    <property type="term" value="F:transmembrane transporter activity"/>
    <property type="evidence" value="ECO:0007669"/>
    <property type="project" value="TreeGrafter"/>
</dbReference>
<dbReference type="GO" id="GO:0044874">
    <property type="term" value="P:lipoprotein localization to outer membrane"/>
    <property type="evidence" value="ECO:0007669"/>
    <property type="project" value="TreeGrafter"/>
</dbReference>
<dbReference type="GO" id="GO:0089705">
    <property type="term" value="P:protein localization to outer membrane"/>
    <property type="evidence" value="ECO:0007669"/>
    <property type="project" value="TreeGrafter"/>
</dbReference>
<dbReference type="CDD" id="cd03255">
    <property type="entry name" value="ABC_MJ0796_LolCDE_FtsE"/>
    <property type="match status" value="1"/>
</dbReference>
<dbReference type="FunFam" id="3.40.50.300:FF:000056">
    <property type="entry name" value="Cell division ATP-binding protein FtsE"/>
    <property type="match status" value="1"/>
</dbReference>
<dbReference type="Gene3D" id="3.40.50.300">
    <property type="entry name" value="P-loop containing nucleotide triphosphate hydrolases"/>
    <property type="match status" value="1"/>
</dbReference>
<dbReference type="InterPro" id="IPR003593">
    <property type="entry name" value="AAA+_ATPase"/>
</dbReference>
<dbReference type="InterPro" id="IPR003439">
    <property type="entry name" value="ABC_transporter-like_ATP-bd"/>
</dbReference>
<dbReference type="InterPro" id="IPR017871">
    <property type="entry name" value="ABC_transporter-like_CS"/>
</dbReference>
<dbReference type="InterPro" id="IPR015854">
    <property type="entry name" value="ABC_transpr_LolD-like"/>
</dbReference>
<dbReference type="InterPro" id="IPR017911">
    <property type="entry name" value="MacB-like_ATP-bd"/>
</dbReference>
<dbReference type="InterPro" id="IPR027417">
    <property type="entry name" value="P-loop_NTPase"/>
</dbReference>
<dbReference type="PANTHER" id="PTHR24220">
    <property type="entry name" value="IMPORT ATP-BINDING PROTEIN"/>
    <property type="match status" value="1"/>
</dbReference>
<dbReference type="PANTHER" id="PTHR24220:SF689">
    <property type="entry name" value="LIPOPROTEIN-RELEASING SYSTEM ATP-BINDING PROTEIN LOLD"/>
    <property type="match status" value="1"/>
</dbReference>
<dbReference type="Pfam" id="PF00005">
    <property type="entry name" value="ABC_tran"/>
    <property type="match status" value="1"/>
</dbReference>
<dbReference type="SMART" id="SM00382">
    <property type="entry name" value="AAA"/>
    <property type="match status" value="1"/>
</dbReference>
<dbReference type="SUPFAM" id="SSF52540">
    <property type="entry name" value="P-loop containing nucleoside triphosphate hydrolases"/>
    <property type="match status" value="1"/>
</dbReference>
<dbReference type="PROSITE" id="PS00211">
    <property type="entry name" value="ABC_TRANSPORTER_1"/>
    <property type="match status" value="1"/>
</dbReference>
<dbReference type="PROSITE" id="PS50893">
    <property type="entry name" value="ABC_TRANSPORTER_2"/>
    <property type="match status" value="1"/>
</dbReference>
<dbReference type="PROSITE" id="PS51244">
    <property type="entry name" value="LOLD"/>
    <property type="match status" value="1"/>
</dbReference>
<gene>
    <name evidence="1" type="primary">lolD</name>
    <name type="ordered locus">AM023</name>
</gene>
<accession>Q5PBX2</accession>